<organism>
    <name type="scientific">Paracoccus pantotrophus</name>
    <name type="common">Thiosphaera pantotropha</name>
    <dbReference type="NCBI Taxonomy" id="82367"/>
    <lineage>
        <taxon>Bacteria</taxon>
        <taxon>Pseudomonadati</taxon>
        <taxon>Pseudomonadota</taxon>
        <taxon>Alphaproteobacteria</taxon>
        <taxon>Rhodobacterales</taxon>
        <taxon>Paracoccaceae</taxon>
        <taxon>Paracoccus</taxon>
    </lineage>
</organism>
<evidence type="ECO:0000255" key="1">
    <source>
        <dbReference type="HAMAP-Rule" id="MF_02200"/>
    </source>
</evidence>
<evidence type="ECO:0000305" key="2"/>
<comment type="function">
    <text evidence="1">Chaperone for NapA, the catalytic subunit of the periplasmic nitrate reductase. It binds directly and specifically to the twin-arginine signal peptide of NapA, preventing premature interaction with the Tat translocase and premature export.</text>
</comment>
<comment type="subunit">
    <text evidence="1">Interacts with the cytoplasmic NapA precursor.</text>
</comment>
<comment type="subcellular location">
    <subcellularLocation>
        <location evidence="1 2">Cytoplasm</location>
    </subcellularLocation>
</comment>
<comment type="similarity">
    <text evidence="1">Belongs to the NapD family.</text>
</comment>
<proteinExistence type="inferred from homology"/>
<protein>
    <recommendedName>
        <fullName evidence="1">Chaperone NapD</fullName>
    </recommendedName>
    <alternativeName>
        <fullName evidence="1">NapA signal peptide-binding chaperone NapD</fullName>
    </alternativeName>
</protein>
<keyword id="KW-0143">Chaperone</keyword>
<keyword id="KW-0963">Cytoplasm</keyword>
<reference key="1">
    <citation type="journal article" date="1995" name="Biochem. J.">
        <title>The napEDABC gene cluster encoding the periplasmic nitrate reductase system of Thiosphaera pantotropha.</title>
        <authorList>
            <person name="Berks B.C."/>
            <person name="Richardson D.J."/>
            <person name="Reilly A."/>
            <person name="Willis A.C."/>
            <person name="Ferguson S.J."/>
        </authorList>
    </citation>
    <scope>NUCLEOTIDE SEQUENCE [GENOMIC DNA]</scope>
    <source>
        <strain>ATCC 35512 / DSM 2944 / CIP 106514 / LMD 82.5 / NBRC 102493 / NCCB 82005 / GB17</strain>
    </source>
</reference>
<name>NAPD_PARPN</name>
<feature type="chain" id="PRO_0000096715" description="Chaperone NapD">
    <location>
        <begin position="1"/>
        <end position="112"/>
    </location>
</feature>
<accession>Q56349</accession>
<dbReference type="EMBL" id="Z36773">
    <property type="protein sequence ID" value="CAA85345.1"/>
    <property type="molecule type" value="Genomic_DNA"/>
</dbReference>
<dbReference type="PIR" id="S56138">
    <property type="entry name" value="S56138"/>
</dbReference>
<dbReference type="SMR" id="Q56349"/>
<dbReference type="STRING" id="82367.SAMN04244567_03481"/>
<dbReference type="eggNOG" id="COG3062">
    <property type="taxonomic scope" value="Bacteria"/>
</dbReference>
<dbReference type="GO" id="GO:0005737">
    <property type="term" value="C:cytoplasm"/>
    <property type="evidence" value="ECO:0007669"/>
    <property type="project" value="UniProtKB-SubCell"/>
</dbReference>
<dbReference type="GO" id="GO:0005048">
    <property type="term" value="F:signal sequence binding"/>
    <property type="evidence" value="ECO:0007669"/>
    <property type="project" value="UniProtKB-UniRule"/>
</dbReference>
<dbReference type="GO" id="GO:0051224">
    <property type="term" value="P:negative regulation of protein transport"/>
    <property type="evidence" value="ECO:0007669"/>
    <property type="project" value="UniProtKB-UniRule"/>
</dbReference>
<dbReference type="Gene3D" id="3.30.70.920">
    <property type="match status" value="1"/>
</dbReference>
<dbReference type="HAMAP" id="MF_02200">
    <property type="entry name" value="NapD"/>
    <property type="match status" value="1"/>
</dbReference>
<dbReference type="InterPro" id="IPR005623">
    <property type="entry name" value="Chaperone_NapD_NO3_reduct"/>
</dbReference>
<dbReference type="PANTHER" id="PTHR38603">
    <property type="entry name" value="CHAPERONE NAPD"/>
    <property type="match status" value="1"/>
</dbReference>
<dbReference type="PANTHER" id="PTHR38603:SF1">
    <property type="entry name" value="CHAPERONE NAPD"/>
    <property type="match status" value="1"/>
</dbReference>
<dbReference type="Pfam" id="PF03927">
    <property type="entry name" value="NapD"/>
    <property type="match status" value="1"/>
</dbReference>
<sequence length="112" mass="12123">MREPDRTPIQRRDILTGKLKQDSGGESRFLHISSAIVTARPDRAADLARHFATLPGTEVHAVQGAKIVLVLEGASVGEIRQPHGAISVMEGVFSANLVFEQILPADEREALS</sequence>
<gene>
    <name evidence="1" type="primary">napD</name>
</gene>